<gene>
    <name type="ORF">AFUA_2G07520</name>
</gene>
<proteinExistence type="inferred from homology"/>
<evidence type="ECO:0000250" key="1">
    <source>
        <dbReference type="UniProtKB" id="P09960"/>
    </source>
</evidence>
<evidence type="ECO:0000250" key="2">
    <source>
        <dbReference type="UniProtKB" id="Q10740"/>
    </source>
</evidence>
<evidence type="ECO:0000255" key="3">
    <source>
        <dbReference type="PROSITE-ProRule" id="PRU10095"/>
    </source>
</evidence>
<evidence type="ECO:0000305" key="4"/>
<protein>
    <recommendedName>
        <fullName>Leucine aminopeptidase 2</fullName>
        <ecNumber>3.4.11.-</ecNumber>
    </recommendedName>
    <alternativeName>
        <fullName>Epoxide hydrolase</fullName>
        <ecNumber>3.3.2.10</ecNumber>
    </alternativeName>
    <alternativeName>
        <fullName>Leukotriene A-4 hydrolase homolog</fullName>
        <shortName>LTA-4 hydrolase</shortName>
    </alternativeName>
</protein>
<feature type="chain" id="PRO_0000324919" description="Leucine aminopeptidase 2">
    <location>
        <begin position="1"/>
        <end position="614"/>
    </location>
</feature>
<feature type="active site" description="Proton acceptor" evidence="3">
    <location>
        <position position="301"/>
    </location>
</feature>
<feature type="active site" description="Proton donor" evidence="3">
    <location>
        <position position="385"/>
    </location>
</feature>
<feature type="binding site" evidence="1">
    <location>
        <begin position="139"/>
        <end position="141"/>
    </location>
    <ligand>
        <name>a peptide</name>
        <dbReference type="ChEBI" id="CHEBI:60466"/>
    </ligand>
</feature>
<feature type="binding site" evidence="1">
    <location>
        <begin position="271"/>
        <end position="276"/>
    </location>
    <ligand>
        <name>a peptide</name>
        <dbReference type="ChEBI" id="CHEBI:60466"/>
    </ligand>
</feature>
<feature type="binding site" evidence="3">
    <location>
        <position position="300"/>
    </location>
    <ligand>
        <name>Zn(2+)</name>
        <dbReference type="ChEBI" id="CHEBI:29105"/>
        <note>catalytic</note>
    </ligand>
</feature>
<feature type="binding site" evidence="3">
    <location>
        <position position="304"/>
    </location>
    <ligand>
        <name>Zn(2+)</name>
        <dbReference type="ChEBI" id="CHEBI:29105"/>
        <note>catalytic</note>
    </ligand>
</feature>
<feature type="binding site" evidence="3">
    <location>
        <position position="323"/>
    </location>
    <ligand>
        <name>Zn(2+)</name>
        <dbReference type="ChEBI" id="CHEBI:29105"/>
        <note>catalytic</note>
    </ligand>
</feature>
<name>LKHA4_ASPFU</name>
<keyword id="KW-0963">Cytoplasm</keyword>
<keyword id="KW-0378">Hydrolase</keyword>
<keyword id="KW-0479">Metal-binding</keyword>
<keyword id="KW-0482">Metalloprotease</keyword>
<keyword id="KW-0539">Nucleus</keyword>
<keyword id="KW-0645">Protease</keyword>
<keyword id="KW-1185">Reference proteome</keyword>
<keyword id="KW-0862">Zinc</keyword>
<organism>
    <name type="scientific">Aspergillus fumigatus (strain ATCC MYA-4609 / CBS 101355 / FGSC A1100 / Af293)</name>
    <name type="common">Neosartorya fumigata</name>
    <dbReference type="NCBI Taxonomy" id="330879"/>
    <lineage>
        <taxon>Eukaryota</taxon>
        <taxon>Fungi</taxon>
        <taxon>Dikarya</taxon>
        <taxon>Ascomycota</taxon>
        <taxon>Pezizomycotina</taxon>
        <taxon>Eurotiomycetes</taxon>
        <taxon>Eurotiomycetidae</taxon>
        <taxon>Eurotiales</taxon>
        <taxon>Aspergillaceae</taxon>
        <taxon>Aspergillus</taxon>
        <taxon>Aspergillus subgen. Fumigati</taxon>
    </lineage>
</organism>
<reference key="1">
    <citation type="journal article" date="2005" name="Nature">
        <title>Genomic sequence of the pathogenic and allergenic filamentous fungus Aspergillus fumigatus.</title>
        <authorList>
            <person name="Nierman W.C."/>
            <person name="Pain A."/>
            <person name="Anderson M.J."/>
            <person name="Wortman J.R."/>
            <person name="Kim H.S."/>
            <person name="Arroyo J."/>
            <person name="Berriman M."/>
            <person name="Abe K."/>
            <person name="Archer D.B."/>
            <person name="Bermejo C."/>
            <person name="Bennett J.W."/>
            <person name="Bowyer P."/>
            <person name="Chen D."/>
            <person name="Collins M."/>
            <person name="Coulsen R."/>
            <person name="Davies R."/>
            <person name="Dyer P.S."/>
            <person name="Farman M.L."/>
            <person name="Fedorova N."/>
            <person name="Fedorova N.D."/>
            <person name="Feldblyum T.V."/>
            <person name="Fischer R."/>
            <person name="Fosker N."/>
            <person name="Fraser A."/>
            <person name="Garcia J.L."/>
            <person name="Garcia M.J."/>
            <person name="Goble A."/>
            <person name="Goldman G.H."/>
            <person name="Gomi K."/>
            <person name="Griffith-Jones S."/>
            <person name="Gwilliam R."/>
            <person name="Haas B.J."/>
            <person name="Haas H."/>
            <person name="Harris D.E."/>
            <person name="Horiuchi H."/>
            <person name="Huang J."/>
            <person name="Humphray S."/>
            <person name="Jimenez J."/>
            <person name="Keller N."/>
            <person name="Khouri H."/>
            <person name="Kitamoto K."/>
            <person name="Kobayashi T."/>
            <person name="Konzack S."/>
            <person name="Kulkarni R."/>
            <person name="Kumagai T."/>
            <person name="Lafton A."/>
            <person name="Latge J.-P."/>
            <person name="Li W."/>
            <person name="Lord A."/>
            <person name="Lu C."/>
            <person name="Majoros W.H."/>
            <person name="May G.S."/>
            <person name="Miller B.L."/>
            <person name="Mohamoud Y."/>
            <person name="Molina M."/>
            <person name="Monod M."/>
            <person name="Mouyna I."/>
            <person name="Mulligan S."/>
            <person name="Murphy L.D."/>
            <person name="O'Neil S."/>
            <person name="Paulsen I."/>
            <person name="Penalva M.A."/>
            <person name="Pertea M."/>
            <person name="Price C."/>
            <person name="Pritchard B.L."/>
            <person name="Quail M.A."/>
            <person name="Rabbinowitsch E."/>
            <person name="Rawlins N."/>
            <person name="Rajandream M.A."/>
            <person name="Reichard U."/>
            <person name="Renauld H."/>
            <person name="Robson G.D."/>
            <person name="Rodriguez de Cordoba S."/>
            <person name="Rodriguez-Pena J.M."/>
            <person name="Ronning C.M."/>
            <person name="Rutter S."/>
            <person name="Salzberg S.L."/>
            <person name="Sanchez M."/>
            <person name="Sanchez-Ferrero J.C."/>
            <person name="Saunders D."/>
            <person name="Seeger K."/>
            <person name="Squares R."/>
            <person name="Squares S."/>
            <person name="Takeuchi M."/>
            <person name="Tekaia F."/>
            <person name="Turner G."/>
            <person name="Vazquez de Aldana C.R."/>
            <person name="Weidman J."/>
            <person name="White O."/>
            <person name="Woodward J.R."/>
            <person name="Yu J.-H."/>
            <person name="Fraser C.M."/>
            <person name="Galagan J.E."/>
            <person name="Asai K."/>
            <person name="Machida M."/>
            <person name="Hall N."/>
            <person name="Barrell B.G."/>
            <person name="Denning D.W."/>
        </authorList>
    </citation>
    <scope>NUCLEOTIDE SEQUENCE [LARGE SCALE GENOMIC DNA]</scope>
    <source>
        <strain>ATCC MYA-4609 / CBS 101355 / FGSC A1100 / Af293</strain>
    </source>
</reference>
<comment type="function">
    <text evidence="2">Aminopeptidase that preferentially cleaves di- and tripeptides. Also has low epoxide hydrolase activity (in vitro). Can hydrolyze the epoxide leukotriene LTA(4) but it forms preferentially 5,6-dihydroxy-7,9,11,14-eicosatetraenoic acid rather than the cytokine leukotriene B(4) as the product compared to the homologous mammalian enzyme (in vitro).</text>
</comment>
<comment type="catalytic activity">
    <reaction evidence="2">
        <text>an epoxide + H2O = an ethanediol</text>
        <dbReference type="Rhea" id="RHEA:19037"/>
        <dbReference type="ChEBI" id="CHEBI:15377"/>
        <dbReference type="ChEBI" id="CHEBI:32955"/>
        <dbReference type="ChEBI" id="CHEBI:140594"/>
        <dbReference type="EC" id="3.3.2.10"/>
    </reaction>
</comment>
<comment type="cofactor">
    <cofactor evidence="2">
        <name>Zn(2+)</name>
        <dbReference type="ChEBI" id="CHEBI:29105"/>
    </cofactor>
    <text evidence="2">Binds 1 zinc ion per subunit.</text>
</comment>
<comment type="subcellular location">
    <subcellularLocation>
        <location evidence="2">Cytoplasm</location>
    </subcellularLocation>
    <subcellularLocation>
        <location evidence="2">Nucleus</location>
    </subcellularLocation>
</comment>
<comment type="similarity">
    <text evidence="4">Belongs to the peptidase M1 family.</text>
</comment>
<sequence length="614" mass="69722">MTTVVNLPRDPNTLSNYNNWVSTHITANFDILFDQRKLAGNVIHRFRSTTDGESNHIILDTNHLDIGSVKVNGQPSEWEYLPRLEPYGTPLKIKLDQGVKLNETIEVDISVQTTEKCTALQWLTPAQTSNKKHPYMFSQCQAIHARSIFPCQDTPDVKCTLDFNITSPLPVIASGLPVRGSSEAPKSDGKTLYKFHQKVPIPSYLFALASGDISEAPIGPRSVVATSPDKLGECQWELEADTEKFINAIEKIVYPYVWGEYNVLILPPSFPYGGMENPIFTFATPSIISKDRENIDVIAHELAHSWSGNLVTNASWEHFWLNEGWTTYLERRLRHGEPYRHFSAIIGWKALTDSVEHFGPEHDFTKLITNLKGMDPDDAFSSIPYEKGFNFLFHLENLVGKSKFDRFIPHYFNKYKGKSLDSYEFKSTILDFFKDDSDASTALNELDWDSWFYAPGLPPKPDFDTSLVDVVYDLAKKWLSLPKSSFKPQPEDIRGLTANQVVVFLEQILVSERQLTPELSKLMGEIYGLAASQNIEVANLYFQVGLQAGDASVVEPTADLLGKIGRMKFVRPLYRKLAKFDRKRALDTFEKHKGFYHPICRAMVEKDLFGKKDE</sequence>
<accession>Q4X265</accession>
<dbReference type="EC" id="3.4.11.-"/>
<dbReference type="EC" id="3.3.2.10"/>
<dbReference type="EMBL" id="AAHF01000001">
    <property type="protein sequence ID" value="EAL93050.1"/>
    <property type="molecule type" value="Genomic_DNA"/>
</dbReference>
<dbReference type="RefSeq" id="XP_755088.1">
    <property type="nucleotide sequence ID" value="XM_749995.1"/>
</dbReference>
<dbReference type="SMR" id="Q4X265"/>
<dbReference type="FunCoup" id="Q4X265">
    <property type="interactions" value="1026"/>
</dbReference>
<dbReference type="STRING" id="330879.Q4X265"/>
<dbReference type="MEROPS" id="M01.034"/>
<dbReference type="EnsemblFungi" id="EAL93050">
    <property type="protein sequence ID" value="EAL93050"/>
    <property type="gene ID" value="AFUA_2G07520"/>
</dbReference>
<dbReference type="GeneID" id="3513337"/>
<dbReference type="KEGG" id="afm:AFUA_2G07520"/>
<dbReference type="VEuPathDB" id="FungiDB:Afu2g07520"/>
<dbReference type="eggNOG" id="KOG1047">
    <property type="taxonomic scope" value="Eukaryota"/>
</dbReference>
<dbReference type="HOGENOM" id="CLU_014505_1_1_1"/>
<dbReference type="InParanoid" id="Q4X265"/>
<dbReference type="OMA" id="CTALQWM"/>
<dbReference type="OrthoDB" id="79562at2759"/>
<dbReference type="Proteomes" id="UP000002530">
    <property type="component" value="Chromosome 2"/>
</dbReference>
<dbReference type="GO" id="GO:0005829">
    <property type="term" value="C:cytosol"/>
    <property type="evidence" value="ECO:0000318"/>
    <property type="project" value="GO_Central"/>
</dbReference>
<dbReference type="GO" id="GO:0000328">
    <property type="term" value="C:fungal-type vacuole lumen"/>
    <property type="evidence" value="ECO:0007669"/>
    <property type="project" value="EnsemblFungi"/>
</dbReference>
<dbReference type="GO" id="GO:0005771">
    <property type="term" value="C:multivesicular body"/>
    <property type="evidence" value="ECO:0007669"/>
    <property type="project" value="EnsemblFungi"/>
</dbReference>
<dbReference type="GO" id="GO:0005634">
    <property type="term" value="C:nucleus"/>
    <property type="evidence" value="ECO:0007669"/>
    <property type="project" value="UniProtKB-SubCell"/>
</dbReference>
<dbReference type="GO" id="GO:0061957">
    <property type="term" value="C:NVT complex"/>
    <property type="evidence" value="ECO:0007669"/>
    <property type="project" value="EnsemblFungi"/>
</dbReference>
<dbReference type="GO" id="GO:0004177">
    <property type="term" value="F:aminopeptidase activity"/>
    <property type="evidence" value="ECO:0000250"/>
    <property type="project" value="UniProtKB"/>
</dbReference>
<dbReference type="GO" id="GO:0004301">
    <property type="term" value="F:epoxide hydrolase activity"/>
    <property type="evidence" value="ECO:0000250"/>
    <property type="project" value="UniProtKB"/>
</dbReference>
<dbReference type="GO" id="GO:0008237">
    <property type="term" value="F:metallopeptidase activity"/>
    <property type="evidence" value="ECO:0007669"/>
    <property type="project" value="UniProtKB-KW"/>
</dbReference>
<dbReference type="GO" id="GO:0008270">
    <property type="term" value="F:zinc ion binding"/>
    <property type="evidence" value="ECO:0000250"/>
    <property type="project" value="UniProtKB"/>
</dbReference>
<dbReference type="GO" id="GO:0120113">
    <property type="term" value="P:cytoplasm to vacuole targeting by the NVT pathway"/>
    <property type="evidence" value="ECO:0007669"/>
    <property type="project" value="EnsemblFungi"/>
</dbReference>
<dbReference type="GO" id="GO:0006629">
    <property type="term" value="P:lipid metabolic process"/>
    <property type="evidence" value="ECO:0007669"/>
    <property type="project" value="EnsemblFungi"/>
</dbReference>
<dbReference type="GO" id="GO:0043171">
    <property type="term" value="P:peptide catabolic process"/>
    <property type="evidence" value="ECO:0000250"/>
    <property type="project" value="UniProtKB"/>
</dbReference>
<dbReference type="GO" id="GO:0030163">
    <property type="term" value="P:protein catabolic process"/>
    <property type="evidence" value="ECO:0007669"/>
    <property type="project" value="EnsemblFungi"/>
</dbReference>
<dbReference type="GO" id="GO:0006508">
    <property type="term" value="P:proteolysis"/>
    <property type="evidence" value="ECO:0007669"/>
    <property type="project" value="UniProtKB-KW"/>
</dbReference>
<dbReference type="CDD" id="cd09599">
    <property type="entry name" value="M1_LTA4H"/>
    <property type="match status" value="1"/>
</dbReference>
<dbReference type="FunFam" id="1.10.390.10:FF:000009">
    <property type="entry name" value="Leukotriene A(4) hydrolase"/>
    <property type="match status" value="1"/>
</dbReference>
<dbReference type="FunFam" id="1.25.40.320:FF:000001">
    <property type="entry name" value="Leukotriene A(4) hydrolase"/>
    <property type="match status" value="1"/>
</dbReference>
<dbReference type="FunFam" id="2.60.40.1730:FF:000004">
    <property type="entry name" value="Leukotriene A(4) hydrolase"/>
    <property type="match status" value="1"/>
</dbReference>
<dbReference type="FunFam" id="3.30.2010.30:FF:000001">
    <property type="entry name" value="Leukotriene A(4) hydrolase"/>
    <property type="match status" value="1"/>
</dbReference>
<dbReference type="Gene3D" id="3.30.2010.30">
    <property type="match status" value="1"/>
</dbReference>
<dbReference type="Gene3D" id="1.10.390.10">
    <property type="entry name" value="Neutral Protease Domain 2"/>
    <property type="match status" value="1"/>
</dbReference>
<dbReference type="Gene3D" id="1.25.40.320">
    <property type="entry name" value="Peptidase M1, leukotriene A4 hydrolase/aminopeptidase C-terminal domain"/>
    <property type="match status" value="1"/>
</dbReference>
<dbReference type="Gene3D" id="2.60.40.1730">
    <property type="entry name" value="tricorn interacting facor f3 domain"/>
    <property type="match status" value="1"/>
</dbReference>
<dbReference type="InterPro" id="IPR045357">
    <property type="entry name" value="Aminopeptidase_N-like_N"/>
</dbReference>
<dbReference type="InterPro" id="IPR042097">
    <property type="entry name" value="Aminopeptidase_N-like_N_sf"/>
</dbReference>
<dbReference type="InterPro" id="IPR016024">
    <property type="entry name" value="ARM-type_fold"/>
</dbReference>
<dbReference type="InterPro" id="IPR012777">
    <property type="entry name" value="LTA4H"/>
</dbReference>
<dbReference type="InterPro" id="IPR049980">
    <property type="entry name" value="LTA4H_cat"/>
</dbReference>
<dbReference type="InterPro" id="IPR038502">
    <property type="entry name" value="M1_LTA-4_hydro/amino_C_sf"/>
</dbReference>
<dbReference type="InterPro" id="IPR034015">
    <property type="entry name" value="M1_LTA4H"/>
</dbReference>
<dbReference type="InterPro" id="IPR001930">
    <property type="entry name" value="Peptidase_M1"/>
</dbReference>
<dbReference type="InterPro" id="IPR015211">
    <property type="entry name" value="Peptidase_M1_C"/>
</dbReference>
<dbReference type="InterPro" id="IPR014782">
    <property type="entry name" value="Peptidase_M1_dom"/>
</dbReference>
<dbReference type="InterPro" id="IPR027268">
    <property type="entry name" value="Peptidase_M4/M1_CTD_sf"/>
</dbReference>
<dbReference type="NCBIfam" id="TIGR02411">
    <property type="entry name" value="leuko_A4_hydro"/>
    <property type="match status" value="1"/>
</dbReference>
<dbReference type="PANTHER" id="PTHR45726">
    <property type="entry name" value="LEUKOTRIENE A-4 HYDROLASE"/>
    <property type="match status" value="1"/>
</dbReference>
<dbReference type="PANTHER" id="PTHR45726:SF3">
    <property type="entry name" value="LEUKOTRIENE A-4 HYDROLASE"/>
    <property type="match status" value="1"/>
</dbReference>
<dbReference type="Pfam" id="PF09127">
    <property type="entry name" value="Leuk-A4-hydro_C"/>
    <property type="match status" value="1"/>
</dbReference>
<dbReference type="Pfam" id="PF01433">
    <property type="entry name" value="Peptidase_M1"/>
    <property type="match status" value="1"/>
</dbReference>
<dbReference type="Pfam" id="PF17900">
    <property type="entry name" value="Peptidase_M1_N"/>
    <property type="match status" value="1"/>
</dbReference>
<dbReference type="PRINTS" id="PR00756">
    <property type="entry name" value="ALADIPTASE"/>
</dbReference>
<dbReference type="SMART" id="SM01263">
    <property type="entry name" value="Leuk-A4-hydro_C"/>
    <property type="match status" value="1"/>
</dbReference>
<dbReference type="SUPFAM" id="SSF48371">
    <property type="entry name" value="ARM repeat"/>
    <property type="match status" value="1"/>
</dbReference>
<dbReference type="SUPFAM" id="SSF63737">
    <property type="entry name" value="Leukotriene A4 hydrolase N-terminal domain"/>
    <property type="match status" value="1"/>
</dbReference>
<dbReference type="SUPFAM" id="SSF55486">
    <property type="entry name" value="Metalloproteases ('zincins'), catalytic domain"/>
    <property type="match status" value="1"/>
</dbReference>
<dbReference type="PROSITE" id="PS00142">
    <property type="entry name" value="ZINC_PROTEASE"/>
    <property type="match status" value="1"/>
</dbReference>